<keyword id="KW-0067">ATP-binding</keyword>
<keyword id="KW-0436">Ligase</keyword>
<keyword id="KW-0547">Nucleotide-binding</keyword>
<keyword id="KW-0648">Protein biosynthesis</keyword>
<reference key="1">
    <citation type="submission" date="2007-04" db="EMBL/GenBank/DDBJ databases">
        <title>Complete sequence of chromosome of Mycobacterium gilvum PYR-GCK.</title>
        <authorList>
            <consortium name="US DOE Joint Genome Institute"/>
            <person name="Copeland A."/>
            <person name="Lucas S."/>
            <person name="Lapidus A."/>
            <person name="Barry K."/>
            <person name="Detter J.C."/>
            <person name="Glavina del Rio T."/>
            <person name="Hammon N."/>
            <person name="Israni S."/>
            <person name="Dalin E."/>
            <person name="Tice H."/>
            <person name="Pitluck S."/>
            <person name="Chain P."/>
            <person name="Malfatti S."/>
            <person name="Shin M."/>
            <person name="Vergez L."/>
            <person name="Schmutz J."/>
            <person name="Larimer F."/>
            <person name="Land M."/>
            <person name="Hauser L."/>
            <person name="Kyrpides N."/>
            <person name="Mikhailova N."/>
            <person name="Miller C."/>
            <person name="Richardson P."/>
        </authorList>
    </citation>
    <scope>NUCLEOTIDE SEQUENCE [LARGE SCALE GENOMIC DNA]</scope>
    <source>
        <strain>PYR-GCK</strain>
    </source>
</reference>
<proteinExistence type="inferred from homology"/>
<protein>
    <recommendedName>
        <fullName evidence="1">Glutamyl-tRNA(Gln) amidotransferase subunit A</fullName>
        <shortName evidence="1">Glu-ADT subunit A</shortName>
        <ecNumber evidence="1">6.3.5.7</ecNumber>
    </recommendedName>
</protein>
<sequence length="494" mass="51222">MSELIKLDAATLADKISSKEVSSAEVTQAFLDQIAATDGDYHAFLHVGAEQALAAAQTVDRAVAAGEHLPSPLAGVPLALKDVFTTTDMPTTCGSKVLEGWTSPYDATVTAKLRSAGIPILGKTNMDEFAMGSSTENSAYGPTRNPWDTERVPGGSGGGSAAALAAFQAPLAIGTDTGGSIRQPAALTATVGVKPTYGTVSRYGLVACASSLDQGGPCARTVLDTALLHQVIAGHDPLDSTSVEAPVPDVVAAARTGAGGDLTGVRIGVVKQLRSGEGYQAGVLASFNAAVDQLTALGAEVTEVDCPHFDYSLPAYYLILPSEVSSNLAKFDGMRYGLRAGDDGTHSAEEVMALTRAAGFGPEVKRRIMIGAYALSAGYYDAYYNQAQKVRTLIARDLDAAYQKVDVLVSPATPTTAFRLGEKVDDPLSMYLFDLCTLPLNLAGHCGMSVPSGLSADDNLPVGLQIMAPALADDRLYRVGAAYEAARGPLPTAL</sequence>
<comment type="function">
    <text evidence="1">Allows the formation of correctly charged Gln-tRNA(Gln) through the transamidation of misacylated Glu-tRNA(Gln) in organisms which lack glutaminyl-tRNA synthetase. The reaction takes place in the presence of glutamine and ATP through an activated gamma-phospho-Glu-tRNA(Gln).</text>
</comment>
<comment type="catalytic activity">
    <reaction evidence="1">
        <text>L-glutamyl-tRNA(Gln) + L-glutamine + ATP + H2O = L-glutaminyl-tRNA(Gln) + L-glutamate + ADP + phosphate + H(+)</text>
        <dbReference type="Rhea" id="RHEA:17521"/>
        <dbReference type="Rhea" id="RHEA-COMP:9681"/>
        <dbReference type="Rhea" id="RHEA-COMP:9684"/>
        <dbReference type="ChEBI" id="CHEBI:15377"/>
        <dbReference type="ChEBI" id="CHEBI:15378"/>
        <dbReference type="ChEBI" id="CHEBI:29985"/>
        <dbReference type="ChEBI" id="CHEBI:30616"/>
        <dbReference type="ChEBI" id="CHEBI:43474"/>
        <dbReference type="ChEBI" id="CHEBI:58359"/>
        <dbReference type="ChEBI" id="CHEBI:78520"/>
        <dbReference type="ChEBI" id="CHEBI:78521"/>
        <dbReference type="ChEBI" id="CHEBI:456216"/>
        <dbReference type="EC" id="6.3.5.7"/>
    </reaction>
</comment>
<comment type="subunit">
    <text evidence="1">Heterotrimer of A, B and C subunits.</text>
</comment>
<comment type="similarity">
    <text evidence="1">Belongs to the amidase family. GatA subfamily.</text>
</comment>
<evidence type="ECO:0000255" key="1">
    <source>
        <dbReference type="HAMAP-Rule" id="MF_00120"/>
    </source>
</evidence>
<organism>
    <name type="scientific">Mycolicibacterium gilvum (strain PYR-GCK)</name>
    <name type="common">Mycobacterium gilvum (strain PYR-GCK)</name>
    <dbReference type="NCBI Taxonomy" id="350054"/>
    <lineage>
        <taxon>Bacteria</taxon>
        <taxon>Bacillati</taxon>
        <taxon>Actinomycetota</taxon>
        <taxon>Actinomycetes</taxon>
        <taxon>Mycobacteriales</taxon>
        <taxon>Mycobacteriaceae</taxon>
        <taxon>Mycolicibacterium</taxon>
    </lineage>
</organism>
<name>GATA_MYCGI</name>
<dbReference type="EC" id="6.3.5.7" evidence="1"/>
<dbReference type="EMBL" id="CP000656">
    <property type="protein sequence ID" value="ABP46715.1"/>
    <property type="molecule type" value="Genomic_DNA"/>
</dbReference>
<dbReference type="SMR" id="A4TE06"/>
<dbReference type="STRING" id="350054.Mflv_4246"/>
<dbReference type="KEGG" id="mgi:Mflv_4246"/>
<dbReference type="eggNOG" id="COG0154">
    <property type="taxonomic scope" value="Bacteria"/>
</dbReference>
<dbReference type="HOGENOM" id="CLU_009600_0_3_11"/>
<dbReference type="OrthoDB" id="9811471at2"/>
<dbReference type="GO" id="GO:0030956">
    <property type="term" value="C:glutamyl-tRNA(Gln) amidotransferase complex"/>
    <property type="evidence" value="ECO:0007669"/>
    <property type="project" value="InterPro"/>
</dbReference>
<dbReference type="GO" id="GO:0005524">
    <property type="term" value="F:ATP binding"/>
    <property type="evidence" value="ECO:0007669"/>
    <property type="project" value="UniProtKB-KW"/>
</dbReference>
<dbReference type="GO" id="GO:0050567">
    <property type="term" value="F:glutaminyl-tRNA synthase (glutamine-hydrolyzing) activity"/>
    <property type="evidence" value="ECO:0007669"/>
    <property type="project" value="UniProtKB-UniRule"/>
</dbReference>
<dbReference type="GO" id="GO:0006412">
    <property type="term" value="P:translation"/>
    <property type="evidence" value="ECO:0007669"/>
    <property type="project" value="UniProtKB-UniRule"/>
</dbReference>
<dbReference type="Gene3D" id="3.90.1300.10">
    <property type="entry name" value="Amidase signature (AS) domain"/>
    <property type="match status" value="1"/>
</dbReference>
<dbReference type="HAMAP" id="MF_00120">
    <property type="entry name" value="GatA"/>
    <property type="match status" value="1"/>
</dbReference>
<dbReference type="InterPro" id="IPR000120">
    <property type="entry name" value="Amidase"/>
</dbReference>
<dbReference type="InterPro" id="IPR020556">
    <property type="entry name" value="Amidase_CS"/>
</dbReference>
<dbReference type="InterPro" id="IPR023631">
    <property type="entry name" value="Amidase_dom"/>
</dbReference>
<dbReference type="InterPro" id="IPR036928">
    <property type="entry name" value="AS_sf"/>
</dbReference>
<dbReference type="InterPro" id="IPR004412">
    <property type="entry name" value="GatA"/>
</dbReference>
<dbReference type="NCBIfam" id="TIGR00132">
    <property type="entry name" value="gatA"/>
    <property type="match status" value="1"/>
</dbReference>
<dbReference type="PANTHER" id="PTHR11895:SF151">
    <property type="entry name" value="GLUTAMYL-TRNA(GLN) AMIDOTRANSFERASE SUBUNIT A"/>
    <property type="match status" value="1"/>
</dbReference>
<dbReference type="PANTHER" id="PTHR11895">
    <property type="entry name" value="TRANSAMIDASE"/>
    <property type="match status" value="1"/>
</dbReference>
<dbReference type="Pfam" id="PF01425">
    <property type="entry name" value="Amidase"/>
    <property type="match status" value="1"/>
</dbReference>
<dbReference type="SUPFAM" id="SSF75304">
    <property type="entry name" value="Amidase signature (AS) enzymes"/>
    <property type="match status" value="1"/>
</dbReference>
<dbReference type="PROSITE" id="PS00571">
    <property type="entry name" value="AMIDASES"/>
    <property type="match status" value="1"/>
</dbReference>
<feature type="chain" id="PRO_1000076135" description="Glutamyl-tRNA(Gln) amidotransferase subunit A">
    <location>
        <begin position="1"/>
        <end position="494"/>
    </location>
</feature>
<feature type="active site" description="Charge relay system" evidence="1">
    <location>
        <position position="81"/>
    </location>
</feature>
<feature type="active site" description="Charge relay system" evidence="1">
    <location>
        <position position="156"/>
    </location>
</feature>
<feature type="active site" description="Acyl-ester intermediate" evidence="1">
    <location>
        <position position="180"/>
    </location>
</feature>
<gene>
    <name evidence="1" type="primary">gatA</name>
    <name type="ordered locus">Mflv_4246</name>
</gene>
<accession>A4TE06</accession>